<name>SFSA_PROMA</name>
<feature type="chain" id="PRO_0000152295" description="Sugar fermentation stimulation protein homolog">
    <location>
        <begin position="1"/>
        <end position="251"/>
    </location>
</feature>
<keyword id="KW-1185">Reference proteome</keyword>
<organism>
    <name type="scientific">Prochlorococcus marinus (strain SARG / CCMP1375 / SS120)</name>
    <dbReference type="NCBI Taxonomy" id="167539"/>
    <lineage>
        <taxon>Bacteria</taxon>
        <taxon>Bacillati</taxon>
        <taxon>Cyanobacteriota</taxon>
        <taxon>Cyanophyceae</taxon>
        <taxon>Synechococcales</taxon>
        <taxon>Prochlorococcaceae</taxon>
        <taxon>Prochlorococcus</taxon>
    </lineage>
</organism>
<dbReference type="EMBL" id="AE017126">
    <property type="protein sequence ID" value="AAP99340.1"/>
    <property type="molecule type" value="Genomic_DNA"/>
</dbReference>
<dbReference type="RefSeq" id="NP_874688.1">
    <property type="nucleotide sequence ID" value="NC_005042.1"/>
</dbReference>
<dbReference type="RefSeq" id="WP_011124449.1">
    <property type="nucleotide sequence ID" value="NC_005042.1"/>
</dbReference>
<dbReference type="SMR" id="Q7VDS4"/>
<dbReference type="STRING" id="167539.Pro_0294"/>
<dbReference type="EnsemblBacteria" id="AAP99340">
    <property type="protein sequence ID" value="AAP99340"/>
    <property type="gene ID" value="Pro_0294"/>
</dbReference>
<dbReference type="KEGG" id="pma:Pro_0294"/>
<dbReference type="PATRIC" id="fig|167539.5.peg.301"/>
<dbReference type="eggNOG" id="COG1489">
    <property type="taxonomic scope" value="Bacteria"/>
</dbReference>
<dbReference type="HOGENOM" id="CLU_052299_2_0_3"/>
<dbReference type="OrthoDB" id="9802365at2"/>
<dbReference type="Proteomes" id="UP000001420">
    <property type="component" value="Chromosome"/>
</dbReference>
<dbReference type="GO" id="GO:0003677">
    <property type="term" value="F:DNA binding"/>
    <property type="evidence" value="ECO:0007669"/>
    <property type="project" value="InterPro"/>
</dbReference>
<dbReference type="CDD" id="cd22359">
    <property type="entry name" value="SfsA-like_bacterial"/>
    <property type="match status" value="1"/>
</dbReference>
<dbReference type="Gene3D" id="2.40.50.580">
    <property type="match status" value="1"/>
</dbReference>
<dbReference type="Gene3D" id="3.40.1350.60">
    <property type="match status" value="1"/>
</dbReference>
<dbReference type="HAMAP" id="MF_00095">
    <property type="entry name" value="SfsA"/>
    <property type="match status" value="1"/>
</dbReference>
<dbReference type="InterPro" id="IPR005224">
    <property type="entry name" value="SfsA"/>
</dbReference>
<dbReference type="InterPro" id="IPR040452">
    <property type="entry name" value="SfsA_C"/>
</dbReference>
<dbReference type="InterPro" id="IPR041465">
    <property type="entry name" value="SfsA_N"/>
</dbReference>
<dbReference type="NCBIfam" id="TIGR00230">
    <property type="entry name" value="sfsA"/>
    <property type="match status" value="1"/>
</dbReference>
<dbReference type="PANTHER" id="PTHR30545">
    <property type="entry name" value="SUGAR FERMENTATION STIMULATION PROTEIN A"/>
    <property type="match status" value="1"/>
</dbReference>
<dbReference type="PANTHER" id="PTHR30545:SF2">
    <property type="entry name" value="SUGAR FERMENTATION STIMULATION PROTEIN A"/>
    <property type="match status" value="1"/>
</dbReference>
<dbReference type="Pfam" id="PF03749">
    <property type="entry name" value="SfsA"/>
    <property type="match status" value="1"/>
</dbReference>
<dbReference type="Pfam" id="PF17746">
    <property type="entry name" value="SfsA_N"/>
    <property type="match status" value="1"/>
</dbReference>
<comment type="similarity">
    <text evidence="1">Belongs to the SfsA family.</text>
</comment>
<accession>Q7VDS4</accession>
<sequence>MIGKTITNFSPLTEGILLKRYKRFLADVELDTGEVVTAHCANTGPMKGVLHVGGRVRLRHSPSPSRKLSWSWEQAQVPSGQSFSWVGVNTALPNKLVRLAIEAGCLKQELGEIFEIKNEVTYGVARKSRIDLLLTPHFNNSDSRKIFVEIKNTTWAKGSTAVFPDTVTTRGQKHLQEMINEVPSSRAVLVPCISRNDIEVFVPGDSADAKYGDLFRLALNAGVEVIPCAFDFHLDCITWEGTKPFLKGENF</sequence>
<evidence type="ECO:0000255" key="1">
    <source>
        <dbReference type="HAMAP-Rule" id="MF_00095"/>
    </source>
</evidence>
<gene>
    <name evidence="1" type="primary">sfsA</name>
    <name type="ordered locus">Pro_0294</name>
</gene>
<protein>
    <recommendedName>
        <fullName evidence="1">Sugar fermentation stimulation protein homolog</fullName>
    </recommendedName>
</protein>
<proteinExistence type="inferred from homology"/>
<reference key="1">
    <citation type="journal article" date="2003" name="Proc. Natl. Acad. Sci. U.S.A.">
        <title>Genome sequence of the cyanobacterium Prochlorococcus marinus SS120, a nearly minimal oxyphototrophic genome.</title>
        <authorList>
            <person name="Dufresne A."/>
            <person name="Salanoubat M."/>
            <person name="Partensky F."/>
            <person name="Artiguenave F."/>
            <person name="Axmann I.M."/>
            <person name="Barbe V."/>
            <person name="Duprat S."/>
            <person name="Galperin M.Y."/>
            <person name="Koonin E.V."/>
            <person name="Le Gall F."/>
            <person name="Makarova K.S."/>
            <person name="Ostrowski M."/>
            <person name="Oztas S."/>
            <person name="Robert C."/>
            <person name="Rogozin I.B."/>
            <person name="Scanlan D.J."/>
            <person name="Tandeau de Marsac N."/>
            <person name="Weissenbach J."/>
            <person name="Wincker P."/>
            <person name="Wolf Y.I."/>
            <person name="Hess W.R."/>
        </authorList>
    </citation>
    <scope>NUCLEOTIDE SEQUENCE [LARGE SCALE GENOMIC DNA]</scope>
    <source>
        <strain>SARG / CCMP1375 / SS120</strain>
    </source>
</reference>